<organism>
    <name type="scientific">Vibrio cholerae serotype O1 (strain ATCC 39315 / El Tor Inaba N16961)</name>
    <dbReference type="NCBI Taxonomy" id="243277"/>
    <lineage>
        <taxon>Bacteria</taxon>
        <taxon>Pseudomonadati</taxon>
        <taxon>Pseudomonadota</taxon>
        <taxon>Gammaproteobacteria</taxon>
        <taxon>Vibrionales</taxon>
        <taxon>Vibrionaceae</taxon>
        <taxon>Vibrio</taxon>
    </lineage>
</organism>
<gene>
    <name type="ordered locus">VC_2040</name>
</gene>
<sequence>MPITSKYSDEHVESILTEIAAVLNKHNASPELTLMVVGNIATNVINQNVAAAQRKVIAEKFAQALVSSLQS</sequence>
<dbReference type="EMBL" id="AE003852">
    <property type="protein sequence ID" value="AAF95188.1"/>
    <property type="molecule type" value="Genomic_DNA"/>
</dbReference>
<dbReference type="PIR" id="B82126">
    <property type="entry name" value="B82126"/>
</dbReference>
<dbReference type="RefSeq" id="NP_231674.1">
    <property type="nucleotide sequence ID" value="NC_002505.1"/>
</dbReference>
<dbReference type="RefSeq" id="WP_001123168.1">
    <property type="nucleotide sequence ID" value="NZ_LT906614.1"/>
</dbReference>
<dbReference type="SMR" id="Q9KQF8"/>
<dbReference type="STRING" id="243277.VC_2040"/>
<dbReference type="DNASU" id="2613419"/>
<dbReference type="EnsemblBacteria" id="AAF95188">
    <property type="protein sequence ID" value="AAF95188"/>
    <property type="gene ID" value="VC_2040"/>
</dbReference>
<dbReference type="KEGG" id="vch:VC_2040"/>
<dbReference type="PATRIC" id="fig|243277.26.peg.1948"/>
<dbReference type="eggNOG" id="COG3082">
    <property type="taxonomic scope" value="Bacteria"/>
</dbReference>
<dbReference type="HOGENOM" id="CLU_175457_0_0_6"/>
<dbReference type="Proteomes" id="UP000000584">
    <property type="component" value="Chromosome 1"/>
</dbReference>
<dbReference type="Gene3D" id="1.10.3390.10">
    <property type="entry name" value="YejL-like"/>
    <property type="match status" value="1"/>
</dbReference>
<dbReference type="HAMAP" id="MF_00816">
    <property type="entry name" value="UPF0352"/>
    <property type="match status" value="1"/>
</dbReference>
<dbReference type="InterPro" id="IPR009857">
    <property type="entry name" value="UPF0352"/>
</dbReference>
<dbReference type="InterPro" id="IPR023202">
    <property type="entry name" value="YejL_sf"/>
</dbReference>
<dbReference type="NCBIfam" id="NF010242">
    <property type="entry name" value="PRK13689.1"/>
    <property type="match status" value="1"/>
</dbReference>
<dbReference type="Pfam" id="PF07208">
    <property type="entry name" value="DUF1414"/>
    <property type="match status" value="1"/>
</dbReference>
<dbReference type="PIRSF" id="PIRSF006188">
    <property type="entry name" value="UCP006188"/>
    <property type="match status" value="1"/>
</dbReference>
<dbReference type="SUPFAM" id="SSF158651">
    <property type="entry name" value="YejL-like"/>
    <property type="match status" value="1"/>
</dbReference>
<feature type="chain" id="PRO_0000201801" description="UPF0352 protein VC_2040">
    <location>
        <begin position="1"/>
        <end position="71"/>
    </location>
</feature>
<proteinExistence type="inferred from homology"/>
<protein>
    <recommendedName>
        <fullName evidence="1">UPF0352 protein VC_2040</fullName>
    </recommendedName>
</protein>
<keyword id="KW-1185">Reference proteome</keyword>
<reference key="1">
    <citation type="journal article" date="2000" name="Nature">
        <title>DNA sequence of both chromosomes of the cholera pathogen Vibrio cholerae.</title>
        <authorList>
            <person name="Heidelberg J.F."/>
            <person name="Eisen J.A."/>
            <person name="Nelson W.C."/>
            <person name="Clayton R.A."/>
            <person name="Gwinn M.L."/>
            <person name="Dodson R.J."/>
            <person name="Haft D.H."/>
            <person name="Hickey E.K."/>
            <person name="Peterson J.D."/>
            <person name="Umayam L.A."/>
            <person name="Gill S.R."/>
            <person name="Nelson K.E."/>
            <person name="Read T.D."/>
            <person name="Tettelin H."/>
            <person name="Richardson D.L."/>
            <person name="Ermolaeva M.D."/>
            <person name="Vamathevan J.J."/>
            <person name="Bass S."/>
            <person name="Qin H."/>
            <person name="Dragoi I."/>
            <person name="Sellers P."/>
            <person name="McDonald L.A."/>
            <person name="Utterback T.R."/>
            <person name="Fleischmann R.D."/>
            <person name="Nierman W.C."/>
            <person name="White O."/>
            <person name="Salzberg S.L."/>
            <person name="Smith H.O."/>
            <person name="Colwell R.R."/>
            <person name="Mekalanos J.J."/>
            <person name="Venter J.C."/>
            <person name="Fraser C.M."/>
        </authorList>
    </citation>
    <scope>NUCLEOTIDE SEQUENCE [LARGE SCALE GENOMIC DNA]</scope>
    <source>
        <strain>ATCC 39315 / El Tor Inaba N16961</strain>
    </source>
</reference>
<name>Y2040_VIBCH</name>
<accession>Q9KQF8</accession>
<comment type="similarity">
    <text evidence="1">Belongs to the UPF0352 family.</text>
</comment>
<evidence type="ECO:0000255" key="1">
    <source>
        <dbReference type="HAMAP-Rule" id="MF_00816"/>
    </source>
</evidence>